<protein>
    <recommendedName>
        <fullName>Ribosomal RNA-processing protein 7 homolog A</fullName>
    </recommendedName>
    <alternativeName>
        <fullName>Gastric cancer antigen Zg14</fullName>
    </alternativeName>
</protein>
<evidence type="ECO:0000255" key="1"/>
<evidence type="ECO:0000269" key="2">
    <source>
    </source>
</evidence>
<evidence type="ECO:0000269" key="3">
    <source>
    </source>
</evidence>
<evidence type="ECO:0000269" key="4">
    <source>
    </source>
</evidence>
<evidence type="ECO:0000305" key="5"/>
<evidence type="ECO:0000312" key="6">
    <source>
        <dbReference type="HGNC" id="HGNC:24286"/>
    </source>
</evidence>
<evidence type="ECO:0007744" key="7">
    <source>
        <dbReference type="PDB" id="7MQ8"/>
    </source>
</evidence>
<evidence type="ECO:0007744" key="8">
    <source>
        <dbReference type="PDB" id="7MQ9"/>
    </source>
</evidence>
<evidence type="ECO:0007744" key="9">
    <source>
        <dbReference type="PDB" id="7MQA"/>
    </source>
</evidence>
<evidence type="ECO:0007744" key="10">
    <source>
    </source>
</evidence>
<evidence type="ECO:0007744" key="11">
    <source>
    </source>
</evidence>
<organism>
    <name type="scientific">Homo sapiens</name>
    <name type="common">Human</name>
    <dbReference type="NCBI Taxonomy" id="9606"/>
    <lineage>
        <taxon>Eukaryota</taxon>
        <taxon>Metazoa</taxon>
        <taxon>Chordata</taxon>
        <taxon>Craniata</taxon>
        <taxon>Vertebrata</taxon>
        <taxon>Euteleostomi</taxon>
        <taxon>Mammalia</taxon>
        <taxon>Eutheria</taxon>
        <taxon>Euarchontoglires</taxon>
        <taxon>Primates</taxon>
        <taxon>Haplorrhini</taxon>
        <taxon>Catarrhini</taxon>
        <taxon>Hominidae</taxon>
        <taxon>Homo</taxon>
    </lineage>
</organism>
<sequence length="280" mass="32334">MVARRRKCAARDPEDRIPSPLGYAAIPIKFSEKQQASHYLYVRAHGVRQGTKSTWPQKRTLFVLNVPPYCTEESLSRLLSTCGLVQSVELQEKPDLAESPKESRSKFFHPKPVPGFQVAYVVFQKPSGVSAALALKGPLLVSTESHPVKSGIHKWISDYADSVPDPEALRVEVDTFMEAYDQKIAEEEAKAKEEEGVPDEEGWVKVTRRGRRPVLPRTEAASLRVLERERRKRSRKELLNFYAWQHRESKMEHLAQLRKKFEEDKQRIELLRAQRKFRPY</sequence>
<dbReference type="EMBL" id="AL022316">
    <property type="status" value="NOT_ANNOTATED_CDS"/>
    <property type="molecule type" value="Genomic_DNA"/>
</dbReference>
<dbReference type="EMBL" id="AK314650">
    <property type="protein sequence ID" value="BAG37211.1"/>
    <property type="molecule type" value="mRNA"/>
</dbReference>
<dbReference type="EMBL" id="BC031838">
    <property type="protein sequence ID" value="AAH31838.1"/>
    <property type="status" value="ALT_INIT"/>
    <property type="molecule type" value="mRNA"/>
</dbReference>
<dbReference type="EMBL" id="BC041639">
    <property type="protein sequence ID" value="AAH41639.1"/>
    <property type="molecule type" value="mRNA"/>
</dbReference>
<dbReference type="EMBL" id="BC042335">
    <property type="protein sequence ID" value="AAH42335.1"/>
    <property type="molecule type" value="mRNA"/>
</dbReference>
<dbReference type="EMBL" id="BC063537">
    <property type="protein sequence ID" value="AAH63537.1"/>
    <property type="molecule type" value="mRNA"/>
</dbReference>
<dbReference type="EMBL" id="BC073834">
    <property type="protein sequence ID" value="AAH73834.1"/>
    <property type="molecule type" value="mRNA"/>
</dbReference>
<dbReference type="EMBL" id="BC121118">
    <property type="protein sequence ID" value="AAI21119.1"/>
    <property type="molecule type" value="mRNA"/>
</dbReference>
<dbReference type="EMBL" id="BC121119">
    <property type="protein sequence ID" value="AAI21120.1"/>
    <property type="molecule type" value="mRNA"/>
</dbReference>
<dbReference type="EMBL" id="AY039240">
    <property type="protein sequence ID" value="AAK68659.1"/>
    <property type="molecule type" value="mRNA"/>
</dbReference>
<dbReference type="CCDS" id="CCDS14036.1"/>
<dbReference type="RefSeq" id="NP_056518.2">
    <property type="nucleotide sequence ID" value="NM_015703.4"/>
</dbReference>
<dbReference type="PDB" id="7MQ8">
    <property type="method" value="EM"/>
    <property type="resolution" value="3.60 A"/>
    <property type="chains" value="NI=1-280"/>
</dbReference>
<dbReference type="PDB" id="7MQ9">
    <property type="method" value="EM"/>
    <property type="resolution" value="3.87 A"/>
    <property type="chains" value="NI=1-280"/>
</dbReference>
<dbReference type="PDB" id="7MQA">
    <property type="method" value="EM"/>
    <property type="resolution" value="2.70 A"/>
    <property type="chains" value="NI=1-280"/>
</dbReference>
<dbReference type="PDBsum" id="7MQ8"/>
<dbReference type="PDBsum" id="7MQ9"/>
<dbReference type="PDBsum" id="7MQA"/>
<dbReference type="EMDB" id="EMD-23936"/>
<dbReference type="EMDB" id="EMD-23937"/>
<dbReference type="EMDB" id="EMD-23938"/>
<dbReference type="SMR" id="Q9Y3A4"/>
<dbReference type="BioGRID" id="118153">
    <property type="interactions" value="117"/>
</dbReference>
<dbReference type="ComplexPortal" id="CPX-2511">
    <property type="entry name" value="Small ribosomal subunit processome"/>
</dbReference>
<dbReference type="FunCoup" id="Q9Y3A4">
    <property type="interactions" value="1896"/>
</dbReference>
<dbReference type="IntAct" id="Q9Y3A4">
    <property type="interactions" value="57"/>
</dbReference>
<dbReference type="MINT" id="Q9Y3A4"/>
<dbReference type="STRING" id="9606.ENSP00000321449"/>
<dbReference type="iPTMnet" id="Q9Y3A4"/>
<dbReference type="PhosphoSitePlus" id="Q9Y3A4"/>
<dbReference type="SwissPalm" id="Q9Y3A4"/>
<dbReference type="BioMuta" id="RRP7A"/>
<dbReference type="DMDM" id="66774227"/>
<dbReference type="jPOST" id="Q9Y3A4"/>
<dbReference type="MassIVE" id="Q9Y3A4"/>
<dbReference type="PaxDb" id="9606-ENSP00000321449"/>
<dbReference type="PeptideAtlas" id="Q9Y3A4"/>
<dbReference type="ProteomicsDB" id="85996"/>
<dbReference type="Pumba" id="Q9Y3A4"/>
<dbReference type="Antibodypedia" id="277">
    <property type="antibodies" value="124 antibodies from 27 providers"/>
</dbReference>
<dbReference type="DNASU" id="27341"/>
<dbReference type="Ensembl" id="ENST00000323013.7">
    <property type="protein sequence ID" value="ENSP00000321449.6"/>
    <property type="gene ID" value="ENSG00000189306.12"/>
</dbReference>
<dbReference type="Ensembl" id="ENST00000718430.1">
    <property type="protein sequence ID" value="ENSP00000520815.1"/>
    <property type="gene ID" value="ENSG00000189306.12"/>
</dbReference>
<dbReference type="GeneID" id="27341"/>
<dbReference type="KEGG" id="hsa:27341"/>
<dbReference type="MANE-Select" id="ENST00000323013.7">
    <property type="protein sequence ID" value="ENSP00000321449.6"/>
    <property type="RefSeq nucleotide sequence ID" value="NM_015703.5"/>
    <property type="RefSeq protein sequence ID" value="NP_056518.2"/>
</dbReference>
<dbReference type="UCSC" id="uc003bcq.4">
    <property type="organism name" value="human"/>
</dbReference>
<dbReference type="AGR" id="HGNC:24286"/>
<dbReference type="CTD" id="27341"/>
<dbReference type="DisGeNET" id="27341"/>
<dbReference type="GeneCards" id="RRP7A"/>
<dbReference type="HGNC" id="HGNC:24286">
    <property type="gene designation" value="RRP7A"/>
</dbReference>
<dbReference type="HPA" id="ENSG00000189306">
    <property type="expression patterns" value="Low tissue specificity"/>
</dbReference>
<dbReference type="MalaCards" id="RRP7A"/>
<dbReference type="MIM" id="619449">
    <property type="type" value="gene"/>
</dbReference>
<dbReference type="MIM" id="619453">
    <property type="type" value="phenotype"/>
</dbReference>
<dbReference type="neXtProt" id="NX_Q9Y3A4"/>
<dbReference type="OpenTargets" id="ENSG00000189306"/>
<dbReference type="PharmGKB" id="PA162402175"/>
<dbReference type="VEuPathDB" id="HostDB:ENSG00000189306"/>
<dbReference type="eggNOG" id="KOG4008">
    <property type="taxonomic scope" value="Eukaryota"/>
</dbReference>
<dbReference type="GeneTree" id="ENSGT00390000018482"/>
<dbReference type="HOGENOM" id="CLU_036234_2_1_1"/>
<dbReference type="InParanoid" id="Q9Y3A4"/>
<dbReference type="OMA" id="GIHKWIA"/>
<dbReference type="OrthoDB" id="5390at2759"/>
<dbReference type="PAN-GO" id="Q9Y3A4">
    <property type="GO annotations" value="4 GO annotations based on evolutionary models"/>
</dbReference>
<dbReference type="PhylomeDB" id="Q9Y3A4"/>
<dbReference type="TreeFam" id="TF313949"/>
<dbReference type="PathwayCommons" id="Q9Y3A4"/>
<dbReference type="Reactome" id="R-HSA-6790901">
    <property type="pathway name" value="rRNA modification in the nucleus and cytosol"/>
</dbReference>
<dbReference type="Reactome" id="R-HSA-6791226">
    <property type="pathway name" value="Major pathway of rRNA processing in the nucleolus and cytosol"/>
</dbReference>
<dbReference type="SignaLink" id="Q9Y3A4"/>
<dbReference type="BioGRID-ORCS" id="27341">
    <property type="hits" value="681 hits in 1123 CRISPR screens"/>
</dbReference>
<dbReference type="CD-CODE" id="91857CE7">
    <property type="entry name" value="Nucleolus"/>
</dbReference>
<dbReference type="ChiTaRS" id="RRP7A">
    <property type="organism name" value="human"/>
</dbReference>
<dbReference type="GeneWiki" id="CTA-126B4.3"/>
<dbReference type="GenomeRNAi" id="27341"/>
<dbReference type="Pharos" id="Q9Y3A4">
    <property type="development level" value="Tbio"/>
</dbReference>
<dbReference type="PRO" id="PR:Q9Y3A4"/>
<dbReference type="Proteomes" id="UP000005640">
    <property type="component" value="Chromosome 22"/>
</dbReference>
<dbReference type="RNAct" id="Q9Y3A4">
    <property type="molecule type" value="protein"/>
</dbReference>
<dbReference type="Bgee" id="ENSG00000189306">
    <property type="expression patterns" value="Expressed in mucosa of transverse colon and 114 other cell types or tissues"/>
</dbReference>
<dbReference type="ExpressionAtlas" id="Q9Y3A4">
    <property type="expression patterns" value="baseline and differential"/>
</dbReference>
<dbReference type="GO" id="GO:0030054">
    <property type="term" value="C:cell junction"/>
    <property type="evidence" value="ECO:0000314"/>
    <property type="project" value="HPA"/>
</dbReference>
<dbReference type="GO" id="GO:0005813">
    <property type="term" value="C:centrosome"/>
    <property type="evidence" value="ECO:0000314"/>
    <property type="project" value="UniProtKB"/>
</dbReference>
<dbReference type="GO" id="GO:0005929">
    <property type="term" value="C:cilium"/>
    <property type="evidence" value="ECO:0000314"/>
    <property type="project" value="UniProtKB"/>
</dbReference>
<dbReference type="GO" id="GO:0032545">
    <property type="term" value="C:CURI complex"/>
    <property type="evidence" value="ECO:0000318"/>
    <property type="project" value="GO_Central"/>
</dbReference>
<dbReference type="GO" id="GO:0005737">
    <property type="term" value="C:cytoplasm"/>
    <property type="evidence" value="ECO:0007669"/>
    <property type="project" value="UniProtKB-KW"/>
</dbReference>
<dbReference type="GO" id="GO:0005730">
    <property type="term" value="C:nucleolus"/>
    <property type="evidence" value="ECO:0000314"/>
    <property type="project" value="UniProtKB"/>
</dbReference>
<dbReference type="GO" id="GO:0005654">
    <property type="term" value="C:nucleoplasm"/>
    <property type="evidence" value="ECO:0000314"/>
    <property type="project" value="HPA"/>
</dbReference>
<dbReference type="GO" id="GO:0032040">
    <property type="term" value="C:small-subunit processome"/>
    <property type="evidence" value="ECO:0000314"/>
    <property type="project" value="UniProtKB"/>
</dbReference>
<dbReference type="GO" id="GO:0034456">
    <property type="term" value="C:UTP-C complex"/>
    <property type="evidence" value="ECO:0000318"/>
    <property type="project" value="GO_Central"/>
</dbReference>
<dbReference type="GO" id="GO:0003723">
    <property type="term" value="F:RNA binding"/>
    <property type="evidence" value="ECO:0007005"/>
    <property type="project" value="UniProtKB"/>
</dbReference>
<dbReference type="GO" id="GO:0001825">
    <property type="term" value="P:blastocyst formation"/>
    <property type="evidence" value="ECO:0007669"/>
    <property type="project" value="Ensembl"/>
</dbReference>
<dbReference type="GO" id="GO:0061523">
    <property type="term" value="P:cilium disassembly"/>
    <property type="evidence" value="ECO:0000315"/>
    <property type="project" value="UniProtKB"/>
</dbReference>
<dbReference type="GO" id="GO:1902570">
    <property type="term" value="P:protein localization to nucleolus"/>
    <property type="evidence" value="ECO:0000315"/>
    <property type="project" value="UniProtKB"/>
</dbReference>
<dbReference type="GO" id="GO:0000028">
    <property type="term" value="P:ribosomal small subunit assembly"/>
    <property type="evidence" value="ECO:0000318"/>
    <property type="project" value="GO_Central"/>
</dbReference>
<dbReference type="GO" id="GO:0042274">
    <property type="term" value="P:ribosomal small subunit biogenesis"/>
    <property type="evidence" value="ECO:0000314"/>
    <property type="project" value="UniProtKB"/>
</dbReference>
<dbReference type="GO" id="GO:0042254">
    <property type="term" value="P:ribosome biogenesis"/>
    <property type="evidence" value="ECO:0000315"/>
    <property type="project" value="UniProtKB"/>
</dbReference>
<dbReference type="GO" id="GO:0006364">
    <property type="term" value="P:rRNA processing"/>
    <property type="evidence" value="ECO:0000315"/>
    <property type="project" value="UniProtKB"/>
</dbReference>
<dbReference type="CDD" id="cd12294">
    <property type="entry name" value="RRM_Rrp7A"/>
    <property type="match status" value="1"/>
</dbReference>
<dbReference type="CDD" id="cd12951">
    <property type="entry name" value="RRP7_Rrp7A"/>
    <property type="match status" value="1"/>
</dbReference>
<dbReference type="FunFam" id="3.30.70.330:FF:000512">
    <property type="entry name" value="Ribosomal RNA-processing 7 homolog A"/>
    <property type="match status" value="1"/>
</dbReference>
<dbReference type="Gene3D" id="3.30.70.330">
    <property type="match status" value="1"/>
</dbReference>
<dbReference type="Gene3D" id="6.10.250.1770">
    <property type="match status" value="1"/>
</dbReference>
<dbReference type="InterPro" id="IPR012677">
    <property type="entry name" value="Nucleotide-bd_a/b_plait_sf"/>
</dbReference>
<dbReference type="InterPro" id="IPR035979">
    <property type="entry name" value="RBD_domain_sf"/>
</dbReference>
<dbReference type="InterPro" id="IPR040447">
    <property type="entry name" value="RRM_Rrp7"/>
</dbReference>
<dbReference type="InterPro" id="IPR040446">
    <property type="entry name" value="RRP7"/>
</dbReference>
<dbReference type="InterPro" id="IPR024326">
    <property type="entry name" value="RRP7_C"/>
</dbReference>
<dbReference type="InterPro" id="IPR034890">
    <property type="entry name" value="Rrp7A_RRM"/>
</dbReference>
<dbReference type="PANTHER" id="PTHR13191">
    <property type="entry name" value="RIBOSOMAL RNA PROCESSING PROTEIN 7-RELATED"/>
    <property type="match status" value="1"/>
</dbReference>
<dbReference type="PANTHER" id="PTHR13191:SF0">
    <property type="entry name" value="RIBOSOMAL RNA-PROCESSING PROTEIN 7 HOMOLOG A-RELATED"/>
    <property type="match status" value="1"/>
</dbReference>
<dbReference type="Pfam" id="PF17799">
    <property type="entry name" value="RRM_Rrp7"/>
    <property type="match status" value="1"/>
</dbReference>
<dbReference type="Pfam" id="PF12923">
    <property type="entry name" value="RRP7"/>
    <property type="match status" value="1"/>
</dbReference>
<dbReference type="SUPFAM" id="SSF54928">
    <property type="entry name" value="RNA-binding domain, RBD"/>
    <property type="match status" value="1"/>
</dbReference>
<keyword id="KW-0002">3D-structure</keyword>
<keyword id="KW-0966">Cell projection</keyword>
<keyword id="KW-0963">Cytoplasm</keyword>
<keyword id="KW-0206">Cytoskeleton</keyword>
<keyword id="KW-0225">Disease variant</keyword>
<keyword id="KW-0991">Intellectual disability</keyword>
<keyword id="KW-0539">Nucleus</keyword>
<keyword id="KW-0597">Phosphoprotein</keyword>
<keyword id="KW-0905">Primary microcephaly</keyword>
<keyword id="KW-1267">Proteomics identification</keyword>
<keyword id="KW-1185">Reference proteome</keyword>
<keyword id="KW-0694">RNA-binding</keyword>
<name>RRP7A_HUMAN</name>
<feature type="chain" id="PRO_0000082008" description="Ribosomal RNA-processing protein 7 homolog A">
    <location>
        <begin position="1"/>
        <end position="280"/>
    </location>
</feature>
<feature type="domain" description="RRM" evidence="1">
    <location>
        <begin position="59"/>
        <end position="159"/>
    </location>
</feature>
<feature type="modified residue" description="Phosphoserine" evidence="10 11">
    <location>
        <position position="99"/>
    </location>
</feature>
<feature type="sequence variant" id="VAR_052227" description="In dbSNP:rs8139383.">
    <original>L</original>
    <variation>M</variation>
    <location>
        <position position="75"/>
    </location>
</feature>
<feature type="sequence variant" id="VAR_052228" description="In dbSNP:rs1812240." evidence="2">
    <original>V</original>
    <variation>I</variation>
    <location>
        <position position="85"/>
    </location>
</feature>
<feature type="sequence variant" id="VAR_052229" description="In dbSNP:rs11553441.">
    <original>V</original>
    <variation>I</variation>
    <location>
        <position position="88"/>
    </location>
</feature>
<feature type="sequence variant" id="VAR_086134" description="In MCPH28; increased proteolytic degradation; decreased recruitment to the nucleolus; decreased interaction with NOL6; decreased function in localization of NOL6 to the nucleolus; loss of function in rRNA processing; changed function in cilia resorption; dbSNP:rs1356719738." evidence="3">
    <original>W</original>
    <variation>C</variation>
    <location>
        <position position="155"/>
    </location>
</feature>
<feature type="sequence conflict" description="In Ref. 4; AAH31838." evidence="5" ref="4">
    <original>RI</original>
    <variation>SA</variation>
    <location>
        <begin position="16"/>
        <end position="17"/>
    </location>
</feature>
<feature type="sequence conflict" description="In Ref. 2; BAG37211." evidence="5" ref="2">
    <original>E</original>
    <variation>K</variation>
    <location>
        <position position="102"/>
    </location>
</feature>
<accession>Q9Y3A4</accession>
<accession>A4FTX2</accession>
<accession>B2RBG4</accession>
<accession>Q0VAD0</accession>
<accession>Q5JZ94</accession>
<accession>Q6P4B5</accession>
<accession>Q8IVR9</accession>
<accession>Q8IVY0</accession>
<accession>Q8N5Q3</accession>
<accession>Q8NEY6</accession>
<accession>Q9Y3H5</accession>
<gene>
    <name evidence="6" type="primary">RRP7A</name>
    <name type="ORF">CGI-96</name>
</gene>
<reference key="1">
    <citation type="journal article" date="2000" name="Genome Res.">
        <title>Identification of novel human genes evolutionarily conserved in Caenorhabditis elegans by comparative proteomics.</title>
        <authorList>
            <person name="Lai C.-H."/>
            <person name="Chou C.-Y."/>
            <person name="Ch'ang L.-Y."/>
            <person name="Liu C.-S."/>
            <person name="Lin W.-C."/>
        </authorList>
    </citation>
    <scope>PRELIMINARY NUCLEOTIDE SEQUENCE [LARGE SCALE MRNA]</scope>
</reference>
<reference key="2">
    <citation type="journal article" date="2004" name="Nat. Genet.">
        <title>Complete sequencing and characterization of 21,243 full-length human cDNAs.</title>
        <authorList>
            <person name="Ota T."/>
            <person name="Suzuki Y."/>
            <person name="Nishikawa T."/>
            <person name="Otsuki T."/>
            <person name="Sugiyama T."/>
            <person name="Irie R."/>
            <person name="Wakamatsu A."/>
            <person name="Hayashi K."/>
            <person name="Sato H."/>
            <person name="Nagai K."/>
            <person name="Kimura K."/>
            <person name="Makita H."/>
            <person name="Sekine M."/>
            <person name="Obayashi M."/>
            <person name="Nishi T."/>
            <person name="Shibahara T."/>
            <person name="Tanaka T."/>
            <person name="Ishii S."/>
            <person name="Yamamoto J."/>
            <person name="Saito K."/>
            <person name="Kawai Y."/>
            <person name="Isono Y."/>
            <person name="Nakamura Y."/>
            <person name="Nagahari K."/>
            <person name="Murakami K."/>
            <person name="Yasuda T."/>
            <person name="Iwayanagi T."/>
            <person name="Wagatsuma M."/>
            <person name="Shiratori A."/>
            <person name="Sudo H."/>
            <person name="Hosoiri T."/>
            <person name="Kaku Y."/>
            <person name="Kodaira H."/>
            <person name="Kondo H."/>
            <person name="Sugawara M."/>
            <person name="Takahashi M."/>
            <person name="Kanda K."/>
            <person name="Yokoi T."/>
            <person name="Furuya T."/>
            <person name="Kikkawa E."/>
            <person name="Omura Y."/>
            <person name="Abe K."/>
            <person name="Kamihara K."/>
            <person name="Katsuta N."/>
            <person name="Sato K."/>
            <person name="Tanikawa M."/>
            <person name="Yamazaki M."/>
            <person name="Ninomiya K."/>
            <person name="Ishibashi T."/>
            <person name="Yamashita H."/>
            <person name="Murakawa K."/>
            <person name="Fujimori K."/>
            <person name="Tanai H."/>
            <person name="Kimata M."/>
            <person name="Watanabe M."/>
            <person name="Hiraoka S."/>
            <person name="Chiba Y."/>
            <person name="Ishida S."/>
            <person name="Ono Y."/>
            <person name="Takiguchi S."/>
            <person name="Watanabe S."/>
            <person name="Yosida M."/>
            <person name="Hotuta T."/>
            <person name="Kusano J."/>
            <person name="Kanehori K."/>
            <person name="Takahashi-Fujii A."/>
            <person name="Hara H."/>
            <person name="Tanase T.-O."/>
            <person name="Nomura Y."/>
            <person name="Togiya S."/>
            <person name="Komai F."/>
            <person name="Hara R."/>
            <person name="Takeuchi K."/>
            <person name="Arita M."/>
            <person name="Imose N."/>
            <person name="Musashino K."/>
            <person name="Yuuki H."/>
            <person name="Oshima A."/>
            <person name="Sasaki N."/>
            <person name="Aotsuka S."/>
            <person name="Yoshikawa Y."/>
            <person name="Matsunawa H."/>
            <person name="Ichihara T."/>
            <person name="Shiohata N."/>
            <person name="Sano S."/>
            <person name="Moriya S."/>
            <person name="Momiyama H."/>
            <person name="Satoh N."/>
            <person name="Takami S."/>
            <person name="Terashima Y."/>
            <person name="Suzuki O."/>
            <person name="Nakagawa S."/>
            <person name="Senoh A."/>
            <person name="Mizoguchi H."/>
            <person name="Goto Y."/>
            <person name="Shimizu F."/>
            <person name="Wakebe H."/>
            <person name="Hishigaki H."/>
            <person name="Watanabe T."/>
            <person name="Sugiyama A."/>
            <person name="Takemoto M."/>
            <person name="Kawakami B."/>
            <person name="Yamazaki M."/>
            <person name="Watanabe K."/>
            <person name="Kumagai A."/>
            <person name="Itakura S."/>
            <person name="Fukuzumi Y."/>
            <person name="Fujimori Y."/>
            <person name="Komiyama M."/>
            <person name="Tashiro H."/>
            <person name="Tanigami A."/>
            <person name="Fujiwara T."/>
            <person name="Ono T."/>
            <person name="Yamada K."/>
            <person name="Fujii Y."/>
            <person name="Ozaki K."/>
            <person name="Hirao M."/>
            <person name="Ohmori Y."/>
            <person name="Kawabata A."/>
            <person name="Hikiji T."/>
            <person name="Kobatake N."/>
            <person name="Inagaki H."/>
            <person name="Ikema Y."/>
            <person name="Okamoto S."/>
            <person name="Okitani R."/>
            <person name="Kawakami T."/>
            <person name="Noguchi S."/>
            <person name="Itoh T."/>
            <person name="Shigeta K."/>
            <person name="Senba T."/>
            <person name="Matsumura K."/>
            <person name="Nakajima Y."/>
            <person name="Mizuno T."/>
            <person name="Morinaga M."/>
            <person name="Sasaki M."/>
            <person name="Togashi T."/>
            <person name="Oyama M."/>
            <person name="Hata H."/>
            <person name="Watanabe M."/>
            <person name="Komatsu T."/>
            <person name="Mizushima-Sugano J."/>
            <person name="Satoh T."/>
            <person name="Shirai Y."/>
            <person name="Takahashi Y."/>
            <person name="Nakagawa K."/>
            <person name="Okumura K."/>
            <person name="Nagase T."/>
            <person name="Nomura N."/>
            <person name="Kikuchi H."/>
            <person name="Masuho Y."/>
            <person name="Yamashita R."/>
            <person name="Nakai K."/>
            <person name="Yada T."/>
            <person name="Nakamura Y."/>
            <person name="Ohara O."/>
            <person name="Isogai T."/>
            <person name="Sugano S."/>
        </authorList>
    </citation>
    <scope>NUCLEOTIDE SEQUENCE [LARGE SCALE MRNA]</scope>
    <source>
        <tissue>Trachea</tissue>
    </source>
</reference>
<reference key="3">
    <citation type="journal article" date="1999" name="Nature">
        <title>The DNA sequence of human chromosome 22.</title>
        <authorList>
            <person name="Dunham I."/>
            <person name="Hunt A.R."/>
            <person name="Collins J.E."/>
            <person name="Bruskiewich R."/>
            <person name="Beare D.M."/>
            <person name="Clamp M."/>
            <person name="Smink L.J."/>
            <person name="Ainscough R."/>
            <person name="Almeida J.P."/>
            <person name="Babbage A.K."/>
            <person name="Bagguley C."/>
            <person name="Bailey J."/>
            <person name="Barlow K.F."/>
            <person name="Bates K.N."/>
            <person name="Beasley O.P."/>
            <person name="Bird C.P."/>
            <person name="Blakey S.E."/>
            <person name="Bridgeman A.M."/>
            <person name="Buck D."/>
            <person name="Burgess J."/>
            <person name="Burrill W.D."/>
            <person name="Burton J."/>
            <person name="Carder C."/>
            <person name="Carter N.P."/>
            <person name="Chen Y."/>
            <person name="Clark G."/>
            <person name="Clegg S.M."/>
            <person name="Cobley V.E."/>
            <person name="Cole C.G."/>
            <person name="Collier R.E."/>
            <person name="Connor R."/>
            <person name="Conroy D."/>
            <person name="Corby N.R."/>
            <person name="Coville G.J."/>
            <person name="Cox A.V."/>
            <person name="Davis J."/>
            <person name="Dawson E."/>
            <person name="Dhami P.D."/>
            <person name="Dockree C."/>
            <person name="Dodsworth S.J."/>
            <person name="Durbin R.M."/>
            <person name="Ellington A.G."/>
            <person name="Evans K.L."/>
            <person name="Fey J.M."/>
            <person name="Fleming K."/>
            <person name="French L."/>
            <person name="Garner A.A."/>
            <person name="Gilbert J.G.R."/>
            <person name="Goward M.E."/>
            <person name="Grafham D.V."/>
            <person name="Griffiths M.N.D."/>
            <person name="Hall C."/>
            <person name="Hall R.E."/>
            <person name="Hall-Tamlyn G."/>
            <person name="Heathcott R.W."/>
            <person name="Ho S."/>
            <person name="Holmes S."/>
            <person name="Hunt S.E."/>
            <person name="Jones M.C."/>
            <person name="Kershaw J."/>
            <person name="Kimberley A.M."/>
            <person name="King A."/>
            <person name="Laird G.K."/>
            <person name="Langford C.F."/>
            <person name="Leversha M.A."/>
            <person name="Lloyd C."/>
            <person name="Lloyd D.M."/>
            <person name="Martyn I.D."/>
            <person name="Mashreghi-Mohammadi M."/>
            <person name="Matthews L.H."/>
            <person name="Mccann O.T."/>
            <person name="Mcclay J."/>
            <person name="Mclaren S."/>
            <person name="McMurray A.A."/>
            <person name="Milne S.A."/>
            <person name="Mortimore B.J."/>
            <person name="Odell C.N."/>
            <person name="Pavitt R."/>
            <person name="Pearce A.V."/>
            <person name="Pearson D."/>
            <person name="Phillimore B.J.C.T."/>
            <person name="Phillips S.H."/>
            <person name="Plumb R.W."/>
            <person name="Ramsay H."/>
            <person name="Ramsey Y."/>
            <person name="Rogers L."/>
            <person name="Ross M.T."/>
            <person name="Scott C.E."/>
            <person name="Sehra H.K."/>
            <person name="Skuce C.D."/>
            <person name="Smalley S."/>
            <person name="Smith M.L."/>
            <person name="Soderlund C."/>
            <person name="Spragon L."/>
            <person name="Steward C.A."/>
            <person name="Sulston J.E."/>
            <person name="Swann R.M."/>
            <person name="Vaudin M."/>
            <person name="Wall M."/>
            <person name="Wallis J.M."/>
            <person name="Whiteley M.N."/>
            <person name="Willey D.L."/>
            <person name="Williams L."/>
            <person name="Williams S.A."/>
            <person name="Williamson H."/>
            <person name="Wilmer T.E."/>
            <person name="Wilming L."/>
            <person name="Wright C.L."/>
            <person name="Hubbard T."/>
            <person name="Bentley D.R."/>
            <person name="Beck S."/>
            <person name="Rogers J."/>
            <person name="Shimizu N."/>
            <person name="Minoshima S."/>
            <person name="Kawasaki K."/>
            <person name="Sasaki T."/>
            <person name="Asakawa S."/>
            <person name="Kudoh J."/>
            <person name="Shintani A."/>
            <person name="Shibuya K."/>
            <person name="Yoshizaki Y."/>
            <person name="Aoki N."/>
            <person name="Mitsuyama S."/>
            <person name="Roe B.A."/>
            <person name="Chen F."/>
            <person name="Chu L."/>
            <person name="Crabtree J."/>
            <person name="Deschamps S."/>
            <person name="Do A."/>
            <person name="Do T."/>
            <person name="Dorman A."/>
            <person name="Fang F."/>
            <person name="Fu Y."/>
            <person name="Hu P."/>
            <person name="Hua A."/>
            <person name="Kenton S."/>
            <person name="Lai H."/>
            <person name="Lao H.I."/>
            <person name="Lewis J."/>
            <person name="Lewis S."/>
            <person name="Lin S.-P."/>
            <person name="Loh P."/>
            <person name="Malaj E."/>
            <person name="Nguyen T."/>
            <person name="Pan H."/>
            <person name="Phan S."/>
            <person name="Qi S."/>
            <person name="Qian Y."/>
            <person name="Ray L."/>
            <person name="Ren Q."/>
            <person name="Shaull S."/>
            <person name="Sloan D."/>
            <person name="Song L."/>
            <person name="Wang Q."/>
            <person name="Wang Y."/>
            <person name="Wang Z."/>
            <person name="White J."/>
            <person name="Willingham D."/>
            <person name="Wu H."/>
            <person name="Yao Z."/>
            <person name="Zhan M."/>
            <person name="Zhang G."/>
            <person name="Chissoe S."/>
            <person name="Murray J."/>
            <person name="Miller N."/>
            <person name="Minx P."/>
            <person name="Fulton R."/>
            <person name="Johnson D."/>
            <person name="Bemis G."/>
            <person name="Bentley D."/>
            <person name="Bradshaw H."/>
            <person name="Bourne S."/>
            <person name="Cordes M."/>
            <person name="Du Z."/>
            <person name="Fulton L."/>
            <person name="Goela D."/>
            <person name="Graves T."/>
            <person name="Hawkins J."/>
            <person name="Hinds K."/>
            <person name="Kemp K."/>
            <person name="Latreille P."/>
            <person name="Layman D."/>
            <person name="Ozersky P."/>
            <person name="Rohlfing T."/>
            <person name="Scheet P."/>
            <person name="Walker C."/>
            <person name="Wamsley A."/>
            <person name="Wohldmann P."/>
            <person name="Pepin K."/>
            <person name="Nelson J."/>
            <person name="Korf I."/>
            <person name="Bedell J.A."/>
            <person name="Hillier L.W."/>
            <person name="Mardis E."/>
            <person name="Waterston R."/>
            <person name="Wilson R."/>
            <person name="Emanuel B.S."/>
            <person name="Shaikh T."/>
            <person name="Kurahashi H."/>
            <person name="Saitta S."/>
            <person name="Budarf M.L."/>
            <person name="McDermid H.E."/>
            <person name="Johnson A."/>
            <person name="Wong A.C.C."/>
            <person name="Morrow B.E."/>
            <person name="Edelmann L."/>
            <person name="Kim U.J."/>
            <person name="Shizuya H."/>
            <person name="Simon M.I."/>
            <person name="Dumanski J.P."/>
            <person name="Peyrard M."/>
            <person name="Kedra D."/>
            <person name="Seroussi E."/>
            <person name="Fransson I."/>
            <person name="Tapia I."/>
            <person name="Bruder C.E."/>
            <person name="O'Brien K.P."/>
            <person name="Wilkinson P."/>
            <person name="Bodenteich A."/>
            <person name="Hartman K."/>
            <person name="Hu X."/>
            <person name="Khan A.S."/>
            <person name="Lane L."/>
            <person name="Tilahun Y."/>
            <person name="Wright H."/>
        </authorList>
    </citation>
    <scope>NUCLEOTIDE SEQUENCE [LARGE SCALE GENOMIC DNA]</scope>
</reference>
<reference key="4">
    <citation type="journal article" date="2004" name="Genome Res.">
        <title>The status, quality, and expansion of the NIH full-length cDNA project: the Mammalian Gene Collection (MGC).</title>
        <authorList>
            <consortium name="The MGC Project Team"/>
        </authorList>
    </citation>
    <scope>NUCLEOTIDE SEQUENCE [LARGE SCALE MRNA]</scope>
    <scope>VARIANT ILE-85</scope>
    <source>
        <tissue>Brain</tissue>
        <tissue>Duodenum</tissue>
        <tissue>Liver</tissue>
        <tissue>Lymph</tissue>
        <tissue>Uterus</tissue>
    </source>
</reference>
<reference key="5">
    <citation type="journal article" date="2002" name="Br. J. Cancer">
        <title>Serological identification and expression analysis of gastric cancer-associated genes.</title>
        <authorList>
            <person name="Line A."/>
            <person name="Stengrevics A."/>
            <person name="Slucka Z."/>
            <person name="Li G."/>
            <person name="Jankevics E."/>
            <person name="Rees R.C."/>
        </authorList>
    </citation>
    <scope>NUCLEOTIDE SEQUENCE [MRNA] OF 32-280</scope>
    <source>
        <tissue>Gastric adenocarcinoma</tissue>
    </source>
</reference>
<reference key="6">
    <citation type="journal article" date="2008" name="Proc. Natl. Acad. Sci. U.S.A.">
        <title>A quantitative atlas of mitotic phosphorylation.</title>
        <authorList>
            <person name="Dephoure N."/>
            <person name="Zhou C."/>
            <person name="Villen J."/>
            <person name="Beausoleil S.A."/>
            <person name="Bakalarski C.E."/>
            <person name="Elledge S.J."/>
            <person name="Gygi S.P."/>
        </authorList>
    </citation>
    <scope>PHOSPHORYLATION [LARGE SCALE ANALYSIS] AT SER-99</scope>
    <scope>IDENTIFICATION BY MASS SPECTROMETRY [LARGE SCALE ANALYSIS]</scope>
    <source>
        <tissue>Cervix carcinoma</tissue>
    </source>
</reference>
<reference key="7">
    <citation type="journal article" date="2010" name="Sci. Signal.">
        <title>Quantitative phosphoproteomics reveals widespread full phosphorylation site occupancy during mitosis.</title>
        <authorList>
            <person name="Olsen J.V."/>
            <person name="Vermeulen M."/>
            <person name="Santamaria A."/>
            <person name="Kumar C."/>
            <person name="Miller M.L."/>
            <person name="Jensen L.J."/>
            <person name="Gnad F."/>
            <person name="Cox J."/>
            <person name="Jensen T.S."/>
            <person name="Nigg E.A."/>
            <person name="Brunak S."/>
            <person name="Mann M."/>
        </authorList>
    </citation>
    <scope>PHOSPHORYLATION [LARGE SCALE ANALYSIS] AT SER-99</scope>
    <scope>IDENTIFICATION BY MASS SPECTROMETRY [LARGE SCALE ANALYSIS]</scope>
    <source>
        <tissue>Cervix carcinoma</tissue>
    </source>
</reference>
<reference key="8">
    <citation type="journal article" date="2020" name="Nat. Commun.">
        <title>RRP7A links primary microcephaly to dysfunction of ribosome biogenesis, resorption of primary cilia, and neurogenesis.</title>
        <authorList>
            <person name="Farooq M."/>
            <person name="Lindbaek L."/>
            <person name="Krogh N."/>
            <person name="Doganli C."/>
            <person name="Keller C."/>
            <person name="Moennich M."/>
            <person name="Goncalves A.B."/>
            <person name="Sakthivel S."/>
            <person name="Mang Y."/>
            <person name="Fatima A."/>
            <person name="Andersen V.S."/>
            <person name="Hussain M.S."/>
            <person name="Eiberg H."/>
            <person name="Hansen L."/>
            <person name="Kjaer K.W."/>
            <person name="Gopalakrishnan J."/>
            <person name="Pedersen L.B."/>
            <person name="Moellgaard K."/>
            <person name="Nielsen H."/>
            <person name="Baig S.M."/>
            <person name="Tommerup N."/>
            <person name="Christensen S.T."/>
            <person name="Larsen L.A."/>
        </authorList>
    </citation>
    <scope>INVOLVEMENT IN MCPH28</scope>
    <scope>VARIANT MCPH28 CYS-155</scope>
    <scope>CHARACTERIZATION OF VARIANT MCPH28 CYS-155</scope>
    <scope>FUNCTION</scope>
    <scope>SUBCELLULAR LOCATION</scope>
    <scope>TISSUE SPECIFICITY</scope>
    <scope>INTERACTION WITH NOL6</scope>
</reference>
<reference evidence="7 8 9" key="9">
    <citation type="journal article" date="2021" name="Science">
        <title>Nucleolar maturation of the human small subunit processome.</title>
        <authorList>
            <person name="Singh S."/>
            <person name="Vanden Broeck A."/>
            <person name="Miller L."/>
            <person name="Chaker-Margot M."/>
            <person name="Klinge S."/>
        </authorList>
    </citation>
    <scope>STRUCTURE BY ELECTRON MICROSCOPY (2.70 ANGSTROMS)</scope>
    <scope>FUNCTION</scope>
    <scope>SUBUNIT</scope>
    <scope>SUBCELLULAR LOCATION</scope>
</reference>
<comment type="function">
    <text evidence="3 4">Nucleolar protein that is involved in ribosomal RNA (rRNA) processing (PubMed:33199730). Also plays a role in primary cilia resorption, and cell cycle progression in neurogenesis and neocortex development (PubMed:33199730). Part of the small subunit (SSU) processome, first precursor of the small eukaryotic ribosomal subunit. During the assembly of the SSU processome in the nucleolus, many ribosome biogenesis factors, an RNA chaperone and ribosomal proteins associate with the nascent pre-rRNA and work in concert to generate RNA folding, modifications, rearrangements and cleavage as well as targeted degradation of pre-ribosomal RNA by the RNA exosome (PubMed:34516797).</text>
</comment>
<comment type="subunit">
    <text evidence="3 4">Part of the small subunit (SSU) processome, composed of more than 70 proteins and the RNA chaperone small nucleolar RNA (snoRNA) U3 (PubMed:34516797). Interacts with NOL6; required for NOL6 localization to nucleolus.</text>
</comment>
<comment type="interaction">
    <interactant intactId="EBI-7223720">
        <id>Q9Y3A4</id>
    </interactant>
    <interactant intactId="EBI-742909">
        <id>Q9H6L4</id>
        <label>ARMC7</label>
    </interactant>
    <organismsDiffer>false</organismsDiffer>
    <experiments>3</experiments>
</comment>
<comment type="interaction">
    <interactant intactId="EBI-7223720">
        <id>Q9Y3A4</id>
    </interactant>
    <interactant intactId="EBI-5278764">
        <id>Q96GN5</id>
        <label>CDCA7L</label>
    </interactant>
    <organismsDiffer>false</organismsDiffer>
    <experiments>3</experiments>
</comment>
<comment type="interaction">
    <interactant intactId="EBI-7223720">
        <id>Q9Y3A4</id>
    </interactant>
    <interactant intactId="EBI-448202">
        <id>O95257</id>
        <label>GADD45G</label>
    </interactant>
    <organismsDiffer>false</organismsDiffer>
    <experiments>3</experiments>
</comment>
<comment type="interaction">
    <interactant intactId="EBI-7223720">
        <id>Q9Y3A4</id>
    </interactant>
    <interactant intactId="EBI-1105213">
        <id>Q9UBB9</id>
        <label>TFIP11</label>
    </interactant>
    <organismsDiffer>false</organismsDiffer>
    <experiments>5</experiments>
</comment>
<comment type="subcellular location">
    <subcellularLocation>
        <location evidence="3 4">Nucleus</location>
        <location evidence="3 4">Nucleolus</location>
    </subcellularLocation>
    <subcellularLocation>
        <location evidence="3">Cell projection</location>
        <location evidence="3">Cilium</location>
    </subcellularLocation>
    <subcellularLocation>
        <location evidence="3">Cytoplasm</location>
        <location evidence="3">Cytoskeleton</location>
        <location evidence="3">Microtubule organizing center</location>
        <location evidence="3">Centrosome</location>
    </subcellularLocation>
</comment>
<comment type="tissue specificity">
    <text evidence="3">Expressed in the apical radial glial cells in the developing brain.</text>
</comment>
<comment type="disease" evidence="3">
    <disease id="DI-06154">
        <name>Microcephaly 28, primary, autosomal recessive</name>
        <acronym>MCPH28</acronym>
        <description>A form of microcephaly, a disease defined as a head circumference more than 3 standard deviations below the age, sex and ethnically matched mean. Brain weight is markedly reduced and the cerebral cortex is disproportionately small. MCPH28 is an autosomal recessive form characterized by reduced head size (down to -8 SD) and variably impaired intellectual development apparent from early childhood.</description>
        <dbReference type="MIM" id="619453"/>
    </disease>
    <text>The disease is caused by variants affecting the gene represented in this entry.</text>
</comment>
<comment type="similarity">
    <text evidence="5">Belongs to the RRP7 family.</text>
</comment>
<comment type="sequence caution" evidence="5">
    <conflict type="erroneous initiation">
        <sequence resource="EMBL-CDS" id="AAH31838"/>
    </conflict>
    <text>Truncated N-terminus.</text>
</comment>
<proteinExistence type="evidence at protein level"/>